<comment type="function">
    <text evidence="3 4 5 6">Part of the ABC transporter complex GbuABC involved in glycine betaine uptake. Responsible for energy coupling to the transport system. Involved, with BetL and OpuC, in osmoprotection and cryoprotection of Listeria. Can also uptake carnitine when carnitine is abundant in the growth medium.</text>
</comment>
<comment type="catalytic activity">
    <reaction>
        <text>a quaternary ammonium(out) + ATP + H2O = a quaternary ammonium(in) + ADP + phosphate + H(+)</text>
        <dbReference type="Rhea" id="RHEA:11036"/>
        <dbReference type="ChEBI" id="CHEBI:15377"/>
        <dbReference type="ChEBI" id="CHEBI:15378"/>
        <dbReference type="ChEBI" id="CHEBI:30616"/>
        <dbReference type="ChEBI" id="CHEBI:35267"/>
        <dbReference type="ChEBI" id="CHEBI:43474"/>
        <dbReference type="ChEBI" id="CHEBI:456216"/>
        <dbReference type="EC" id="7.6.2.9"/>
    </reaction>
</comment>
<comment type="activity regulation">
    <text evidence="4">The complex is activated by an osmotic gradient or by low temperature.</text>
</comment>
<comment type="subunit">
    <text evidence="8">The complex is composed of two ATP-binding proteins (GbuA), two transmembrane proteins (GbuB) and a solute-binding protein (GbuC).</text>
</comment>
<comment type="disruption phenotype">
    <text evidence="3">Mutants are impaired in the transport of glycine betaine at elevated osmolarity and at decreased temperature.</text>
</comment>
<comment type="similarity">
    <text evidence="7">Belongs to the ABC transporter superfamily.</text>
</comment>
<proteinExistence type="evidence at protein level"/>
<sequence length="397" mass="43626">MSKIKVEELTKIFGKKASKASSLLSQGKSKTDILKETGATIGVNKASFSVEEGEIFVIMGLSGSGKSTLVRLLNRLIEPTSGKIWLDGKELSSLNKKELLEVRRKSMSMVFQNFGLFPNRTINRNVEYGLEIQGMDKEEREKNAAESLALVGLAGYGDQYPSQLSGGMQQRVGLARALANNPDILLMDEAFSALDPLNRKDMQDQLLDLQDKMKKTIIFITHDLDEALRIGDHIMIMRDGSVVQTGSPEEILAHPANEYVEKFIEDVDRSKVYTASNVMIRPEIVNFEKDGPRVALKRMREAGTSSVFVVKRNRELVGIVHAAEVSKLVKENITSLETALHRDVPTTGLDTPLAEIMDTISTTTIPIAVTEDGKLKGIIIRGSVLAALSGNEVNVNA</sequence>
<keyword id="KW-0029">Amino-acid transport</keyword>
<keyword id="KW-0067">ATP-binding</keyword>
<keyword id="KW-0129">CBS domain</keyword>
<keyword id="KW-0547">Nucleotide-binding</keyword>
<keyword id="KW-0677">Repeat</keyword>
<keyword id="KW-0346">Stress response</keyword>
<keyword id="KW-1278">Translocase</keyword>
<keyword id="KW-0813">Transport</keyword>
<protein>
    <recommendedName>
        <fullName>Glycine betaine/carnitine transport ATP-binding protein GbuA</fullName>
        <ecNumber>7.6.2.9</ecNumber>
    </recommendedName>
</protein>
<organism>
    <name type="scientific">Listeria monocytogenes serotype 1/2a (strain 10403S)</name>
    <dbReference type="NCBI Taxonomy" id="393133"/>
    <lineage>
        <taxon>Bacteria</taxon>
        <taxon>Bacillati</taxon>
        <taxon>Bacillota</taxon>
        <taxon>Bacilli</taxon>
        <taxon>Bacillales</taxon>
        <taxon>Listeriaceae</taxon>
        <taxon>Listeria</taxon>
    </lineage>
</organism>
<accession>Q9RR46</accession>
<accession>G2K536</accession>
<dbReference type="EC" id="7.6.2.9"/>
<dbReference type="EMBL" id="AF039835">
    <property type="protein sequence ID" value="AAD29104.1"/>
    <property type="molecule type" value="Genomic_DNA"/>
</dbReference>
<dbReference type="EMBL" id="CP002002">
    <property type="protein sequence ID" value="AEO06014.1"/>
    <property type="molecule type" value="Genomic_DNA"/>
</dbReference>
<dbReference type="PIR" id="AF1201">
    <property type="entry name" value="AF1201"/>
</dbReference>
<dbReference type="RefSeq" id="WP_003722878.1">
    <property type="nucleotide sequence ID" value="NC_017544.1"/>
</dbReference>
<dbReference type="SMR" id="Q9RR46"/>
<dbReference type="KEGG" id="lmt:LMRG_02114"/>
<dbReference type="HOGENOM" id="CLU_000604_2_0_9"/>
<dbReference type="Proteomes" id="UP000001288">
    <property type="component" value="Chromosome"/>
</dbReference>
<dbReference type="GO" id="GO:0016020">
    <property type="term" value="C:membrane"/>
    <property type="evidence" value="ECO:0007669"/>
    <property type="project" value="InterPro"/>
</dbReference>
<dbReference type="GO" id="GO:0031459">
    <property type="term" value="F:ABC-type glycine betaine transporter activity"/>
    <property type="evidence" value="ECO:0000314"/>
    <property type="project" value="UniProtKB"/>
</dbReference>
<dbReference type="GO" id="GO:0005524">
    <property type="term" value="F:ATP binding"/>
    <property type="evidence" value="ECO:0007669"/>
    <property type="project" value="UniProtKB-KW"/>
</dbReference>
<dbReference type="GO" id="GO:0016887">
    <property type="term" value="F:ATP hydrolysis activity"/>
    <property type="evidence" value="ECO:0007669"/>
    <property type="project" value="InterPro"/>
</dbReference>
<dbReference type="GO" id="GO:0015226">
    <property type="term" value="F:carnitine transmembrane transporter activity"/>
    <property type="evidence" value="ECO:0000314"/>
    <property type="project" value="UniProtKB"/>
</dbReference>
<dbReference type="GO" id="GO:0006865">
    <property type="term" value="P:amino acid transport"/>
    <property type="evidence" value="ECO:0007669"/>
    <property type="project" value="UniProtKB-KW"/>
</dbReference>
<dbReference type="GO" id="GO:0015879">
    <property type="term" value="P:carnitine transport"/>
    <property type="evidence" value="ECO:0000314"/>
    <property type="project" value="UniProtKB"/>
</dbReference>
<dbReference type="GO" id="GO:0031460">
    <property type="term" value="P:glycine betaine transport"/>
    <property type="evidence" value="ECO:0000314"/>
    <property type="project" value="UniProtKB"/>
</dbReference>
<dbReference type="GO" id="GO:0009409">
    <property type="term" value="P:response to cold"/>
    <property type="evidence" value="ECO:0000314"/>
    <property type="project" value="UniProtKB"/>
</dbReference>
<dbReference type="GO" id="GO:0006970">
    <property type="term" value="P:response to osmotic stress"/>
    <property type="evidence" value="ECO:0000314"/>
    <property type="project" value="UniProtKB"/>
</dbReference>
<dbReference type="CDD" id="cd03294">
    <property type="entry name" value="ABC_Pro_Gly_Betaine"/>
    <property type="match status" value="1"/>
</dbReference>
<dbReference type="CDD" id="cd09831">
    <property type="entry name" value="CBS_pair_ABC_Gly_Pro_assoc"/>
    <property type="match status" value="1"/>
</dbReference>
<dbReference type="FunFam" id="3.40.50.300:FF:000201">
    <property type="entry name" value="Glycine betaine/L-proline ABC transporter ATP-binding protein"/>
    <property type="match status" value="1"/>
</dbReference>
<dbReference type="Gene3D" id="3.10.580.10">
    <property type="entry name" value="CBS-domain"/>
    <property type="match status" value="1"/>
</dbReference>
<dbReference type="Gene3D" id="3.40.50.300">
    <property type="entry name" value="P-loop containing nucleotide triphosphate hydrolases"/>
    <property type="match status" value="1"/>
</dbReference>
<dbReference type="InterPro" id="IPR003593">
    <property type="entry name" value="AAA+_ATPase"/>
</dbReference>
<dbReference type="InterPro" id="IPR051921">
    <property type="entry name" value="ABC_osmolyte_uptake_ATP-bind"/>
</dbReference>
<dbReference type="InterPro" id="IPR003439">
    <property type="entry name" value="ABC_transporter-like_ATP-bd"/>
</dbReference>
<dbReference type="InterPro" id="IPR017871">
    <property type="entry name" value="ABC_transporter-like_CS"/>
</dbReference>
<dbReference type="InterPro" id="IPR000644">
    <property type="entry name" value="CBS_dom"/>
</dbReference>
<dbReference type="InterPro" id="IPR046342">
    <property type="entry name" value="CBS_dom_sf"/>
</dbReference>
<dbReference type="InterPro" id="IPR005892">
    <property type="entry name" value="Gly-betaine_transp_ATP-bd"/>
</dbReference>
<dbReference type="InterPro" id="IPR027417">
    <property type="entry name" value="P-loop_NTPase"/>
</dbReference>
<dbReference type="NCBIfam" id="TIGR01186">
    <property type="entry name" value="proV"/>
    <property type="match status" value="1"/>
</dbReference>
<dbReference type="PANTHER" id="PTHR43869">
    <property type="entry name" value="GLYCINE BETAINE/PROLINE BETAINE TRANSPORT SYSTEM ATP-BINDING PROTEIN PROV"/>
    <property type="match status" value="1"/>
</dbReference>
<dbReference type="PANTHER" id="PTHR43869:SF1">
    <property type="entry name" value="GLYCINE BETAINE_PROLINE BETAINE TRANSPORT SYSTEM ATP-BINDING PROTEIN PROV"/>
    <property type="match status" value="1"/>
</dbReference>
<dbReference type="Pfam" id="PF00005">
    <property type="entry name" value="ABC_tran"/>
    <property type="match status" value="1"/>
</dbReference>
<dbReference type="Pfam" id="PF00571">
    <property type="entry name" value="CBS"/>
    <property type="match status" value="2"/>
</dbReference>
<dbReference type="SMART" id="SM00382">
    <property type="entry name" value="AAA"/>
    <property type="match status" value="1"/>
</dbReference>
<dbReference type="SUPFAM" id="SSF54631">
    <property type="entry name" value="CBS-domain pair"/>
    <property type="match status" value="1"/>
</dbReference>
<dbReference type="SUPFAM" id="SSF52540">
    <property type="entry name" value="P-loop containing nucleoside triphosphate hydrolases"/>
    <property type="match status" value="1"/>
</dbReference>
<dbReference type="PROSITE" id="PS00211">
    <property type="entry name" value="ABC_TRANSPORTER_1"/>
    <property type="match status" value="1"/>
</dbReference>
<dbReference type="PROSITE" id="PS50893">
    <property type="entry name" value="ABC_TRANSPORTER_2"/>
    <property type="match status" value="1"/>
</dbReference>
<dbReference type="PROSITE" id="PS51371">
    <property type="entry name" value="CBS"/>
    <property type="match status" value="2"/>
</dbReference>
<reference key="1">
    <citation type="journal article" date="1999" name="Appl. Environ. Microbiol.">
        <title>Identification of an ATP-driven, osmoregulated glycine betaine transport system in Listeria monocytogenes.</title>
        <authorList>
            <person name="Ko R."/>
            <person name="Smith L.T."/>
        </authorList>
    </citation>
    <scope>NUCLEOTIDE SEQUENCE [GENOMIC DNA]</scope>
    <scope>FUNCTION</scope>
    <scope>SUBUNIT</scope>
    <scope>DISRUPTION PHENOTYPE</scope>
    <source>
        <strain>10403S</strain>
    </source>
</reference>
<reference key="2">
    <citation type="submission" date="2010-04" db="EMBL/GenBank/DDBJ databases">
        <title>The genome sequence of Listeria monocytogenes strain 10403S.</title>
        <authorList>
            <consortium name="The Broad Institute Genome Sequencing Platform"/>
            <consortium name="The Broad Institute Genome Sequencing Center for Infectious Disease"/>
            <person name="Borowsky M."/>
            <person name="Borodovsky M."/>
            <person name="Young S.K."/>
            <person name="Zeng Q."/>
            <person name="Koehrsen M."/>
            <person name="Fitzgerald M."/>
            <person name="Wiedmann M."/>
            <person name="Swaminathan B."/>
            <person name="Lauer P."/>
            <person name="Portnoy D."/>
            <person name="Cossart P."/>
            <person name="Buchrieser C."/>
            <person name="Higgins D."/>
            <person name="Abouelleil A."/>
            <person name="Alvarado L."/>
            <person name="Arachchi H.M."/>
            <person name="Berlin A."/>
            <person name="Borenstein D."/>
            <person name="Brown A."/>
            <person name="Chapman S.B."/>
            <person name="Chen Z."/>
            <person name="Dunbar C.D."/>
            <person name="Engels R."/>
            <person name="Freedman E."/>
            <person name="Gearin G."/>
            <person name="Gellesch M."/>
            <person name="Goldberg J."/>
            <person name="Griggs A."/>
            <person name="Gujja S."/>
            <person name="Heilman E."/>
            <person name="Heiman D."/>
            <person name="Howarth C."/>
            <person name="Jen D."/>
            <person name="Larson L."/>
            <person name="Lui A."/>
            <person name="MacDonald J."/>
            <person name="Mehta T."/>
            <person name="Montmayeur A."/>
            <person name="Neiman D."/>
            <person name="Park D."/>
            <person name="Pearson M."/>
            <person name="Priest M."/>
            <person name="Richards J."/>
            <person name="Roberts A."/>
            <person name="Saif S."/>
            <person name="Shea T."/>
            <person name="Shenoy N."/>
            <person name="Sisk P."/>
            <person name="Stolte C."/>
            <person name="Sykes S."/>
            <person name="Walk T."/>
            <person name="White J."/>
            <person name="Yandava C."/>
            <person name="Haas B."/>
            <person name="Nusbaum C."/>
            <person name="Birren B."/>
        </authorList>
    </citation>
    <scope>NUCLEOTIDE SEQUENCE [LARGE SCALE GENOMIC DNA]</scope>
    <source>
        <strain>10403S</strain>
    </source>
</reference>
<reference key="3">
    <citation type="journal article" date="2000" name="J. Bacteriol.">
        <title>Osmotic and chill activation of glycine betaine porter II in Listeria monocytogenes membrane vesicles.</title>
        <authorList>
            <person name="Gerhardt P.N."/>
            <person name="Tombras Smith L."/>
            <person name="Smith G.M."/>
        </authorList>
    </citation>
    <scope>FUNCTION</scope>
    <scope>ACTIVITY REGULATION</scope>
</reference>
<reference key="4">
    <citation type="journal article" date="2002" name="Appl. Environ. Microbiol.">
        <title>Gbu glycine betaine porter and carnitine uptake in osmotically stressed Listeria monocytogenes cells.</title>
        <authorList>
            <person name="Mendum M.L."/>
            <person name="Smith L.T."/>
        </authorList>
    </citation>
    <scope>FUNCTION IN CARNITINE UPTAKE</scope>
    <source>
        <strain>10403S</strain>
    </source>
</reference>
<reference key="5">
    <citation type="journal article" date="2003" name="Appl. Environ. Microbiol.">
        <title>Three transporters mediate uptake of glycine betaine and carnitine by Listeria monocytogenes in response to hyperosmotic stress.</title>
        <authorList>
            <person name="Angelidis A.S."/>
            <person name="Smith G.M."/>
        </authorList>
    </citation>
    <scope>FUNCTION IN GLYCINE BETAINE AND CARNITINE UPTAKE</scope>
    <source>
        <strain>10403S</strain>
    </source>
</reference>
<name>GBUA_LISM4</name>
<evidence type="ECO:0000255" key="1">
    <source>
        <dbReference type="PROSITE-ProRule" id="PRU00434"/>
    </source>
</evidence>
<evidence type="ECO:0000255" key="2">
    <source>
        <dbReference type="PROSITE-ProRule" id="PRU00703"/>
    </source>
</evidence>
<evidence type="ECO:0000269" key="3">
    <source>
    </source>
</evidence>
<evidence type="ECO:0000269" key="4">
    <source>
    </source>
</evidence>
<evidence type="ECO:0000269" key="5">
    <source>
    </source>
</evidence>
<evidence type="ECO:0000269" key="6">
    <source>
    </source>
</evidence>
<evidence type="ECO:0000305" key="7"/>
<evidence type="ECO:0000305" key="8">
    <source>
    </source>
</evidence>
<feature type="chain" id="PRO_0000417958" description="Glycine betaine/carnitine transport ATP-binding protein GbuA">
    <location>
        <begin position="1"/>
        <end position="397"/>
    </location>
</feature>
<feature type="domain" description="ABC transporter" evidence="1">
    <location>
        <begin position="28"/>
        <end position="264"/>
    </location>
</feature>
<feature type="domain" description="CBS 1" evidence="2">
    <location>
        <begin position="279"/>
        <end position="335"/>
    </location>
</feature>
<feature type="domain" description="CBS 2" evidence="2">
    <location>
        <begin position="340"/>
        <end position="395"/>
    </location>
</feature>
<feature type="binding site" evidence="1">
    <location>
        <begin position="60"/>
        <end position="67"/>
    </location>
    <ligand>
        <name>ATP</name>
        <dbReference type="ChEBI" id="CHEBI:30616"/>
    </ligand>
</feature>
<gene>
    <name type="primary">gbuA</name>
    <name type="ordered locus">LMRG_02114</name>
</gene>